<accession>A9M8Z5</accession>
<name>COXZ_BRUC2</name>
<feature type="chain" id="PRO_1000076812" description="Cytochrome c oxidase assembly protein CtaG">
    <location>
        <begin position="1"/>
        <end position="201"/>
    </location>
</feature>
<feature type="topological domain" description="Cytoplasmic" evidence="1">
    <location>
        <begin position="1"/>
        <end position="13"/>
    </location>
</feature>
<feature type="transmembrane region" description="Helical; Signal-anchor for type II membrane protein" evidence="1">
    <location>
        <begin position="14"/>
        <end position="36"/>
    </location>
</feature>
<feature type="topological domain" description="Periplasmic" evidence="1">
    <location>
        <begin position="37"/>
        <end position="201"/>
    </location>
</feature>
<gene>
    <name evidence="1" type="primary">ctaG</name>
    <name type="ordered locus">BCAN_A0477</name>
</gene>
<keyword id="KW-0997">Cell inner membrane</keyword>
<keyword id="KW-1003">Cell membrane</keyword>
<keyword id="KW-0186">Copper</keyword>
<keyword id="KW-0472">Membrane</keyword>
<keyword id="KW-1185">Reference proteome</keyword>
<keyword id="KW-0735">Signal-anchor</keyword>
<keyword id="KW-0812">Transmembrane</keyword>
<keyword id="KW-1133">Transmembrane helix</keyword>
<comment type="function">
    <text evidence="1">Exerts its effect at some terminal stage of cytochrome c oxidase synthesis, probably by being involved in the insertion of the copper B into subunit I.</text>
</comment>
<comment type="subcellular location">
    <subcellularLocation>
        <location evidence="1">Cell inner membrane</location>
        <topology evidence="1">Single-pass type II membrane protein</topology>
        <orientation evidence="1">Periplasmic side</orientation>
    </subcellularLocation>
</comment>
<comment type="similarity">
    <text evidence="1">Belongs to the COX11/CtaG family.</text>
</comment>
<protein>
    <recommendedName>
        <fullName evidence="1">Cytochrome c oxidase assembly protein CtaG</fullName>
    </recommendedName>
</protein>
<proteinExistence type="inferred from homology"/>
<sequence length="201" mass="22472">MTDQGENEKKQRRSNATIAVACLSFFVCMIGAAYASVPLYRIFCQVTGYGGTTQRVEQYSDTILDKTIKVRFDANIANGLPWDFKPMQREVTVRIGETTMIKYEAHNLFGEETYGRASFNVAPGRAGAYFNKVECFCFTDNTLKPGEDLELPVVFFVDPEFVNDPDLKDVKTITLSYTFFPIDKPRPVVNAKAVGSTRNGG</sequence>
<organism>
    <name type="scientific">Brucella canis (strain ATCC 23365 / NCTC 10854 / RM-666)</name>
    <dbReference type="NCBI Taxonomy" id="483179"/>
    <lineage>
        <taxon>Bacteria</taxon>
        <taxon>Pseudomonadati</taxon>
        <taxon>Pseudomonadota</taxon>
        <taxon>Alphaproteobacteria</taxon>
        <taxon>Hyphomicrobiales</taxon>
        <taxon>Brucellaceae</taxon>
        <taxon>Brucella/Ochrobactrum group</taxon>
        <taxon>Brucella</taxon>
    </lineage>
</organism>
<reference key="1">
    <citation type="submission" date="2007-10" db="EMBL/GenBank/DDBJ databases">
        <title>Brucella canis ATCC 23365 whole genome shotgun sequencing project.</title>
        <authorList>
            <person name="Setubal J.C."/>
            <person name="Bowns C."/>
            <person name="Boyle S."/>
            <person name="Crasta O.R."/>
            <person name="Czar M.J."/>
            <person name="Dharmanolla C."/>
            <person name="Gillespie J.J."/>
            <person name="Kenyon R.W."/>
            <person name="Lu J."/>
            <person name="Mane S."/>
            <person name="Mohapatra S."/>
            <person name="Nagrani S."/>
            <person name="Purkayastha A."/>
            <person name="Rajasimha H.K."/>
            <person name="Shallom J.M."/>
            <person name="Shallom S."/>
            <person name="Shukla M."/>
            <person name="Snyder E.E."/>
            <person name="Sobral B.W."/>
            <person name="Wattam A.R."/>
            <person name="Will R."/>
            <person name="Williams K."/>
            <person name="Yoo H."/>
            <person name="Bruce D."/>
            <person name="Detter C."/>
            <person name="Munk C."/>
            <person name="Brettin T.S."/>
        </authorList>
    </citation>
    <scope>NUCLEOTIDE SEQUENCE [LARGE SCALE GENOMIC DNA]</scope>
    <source>
        <strain>ATCC 23365 / NCTC 10854 / RM-666</strain>
    </source>
</reference>
<evidence type="ECO:0000255" key="1">
    <source>
        <dbReference type="HAMAP-Rule" id="MF_00155"/>
    </source>
</evidence>
<dbReference type="EMBL" id="CP000872">
    <property type="protein sequence ID" value="ABX61559.1"/>
    <property type="molecule type" value="Genomic_DNA"/>
</dbReference>
<dbReference type="RefSeq" id="WP_004690616.1">
    <property type="nucleotide sequence ID" value="NC_010103.1"/>
</dbReference>
<dbReference type="SMR" id="A9M8Z5"/>
<dbReference type="GeneID" id="55590227"/>
<dbReference type="KEGG" id="bcs:BCAN_A0477"/>
<dbReference type="HOGENOM" id="CLU_045000_5_0_5"/>
<dbReference type="PhylomeDB" id="A9M8Z5"/>
<dbReference type="Proteomes" id="UP000001385">
    <property type="component" value="Chromosome I"/>
</dbReference>
<dbReference type="GO" id="GO:0005886">
    <property type="term" value="C:plasma membrane"/>
    <property type="evidence" value="ECO:0007669"/>
    <property type="project" value="UniProtKB-SubCell"/>
</dbReference>
<dbReference type="GO" id="GO:0005507">
    <property type="term" value="F:copper ion binding"/>
    <property type="evidence" value="ECO:0007669"/>
    <property type="project" value="InterPro"/>
</dbReference>
<dbReference type="GO" id="GO:0008535">
    <property type="term" value="P:respiratory chain complex IV assembly"/>
    <property type="evidence" value="ECO:0007669"/>
    <property type="project" value="UniProtKB-UniRule"/>
</dbReference>
<dbReference type="FunFam" id="2.60.370.10:FF:000001">
    <property type="entry name" value="COX11 cytochrome c oxidase assembly homolog"/>
    <property type="match status" value="1"/>
</dbReference>
<dbReference type="Gene3D" id="2.60.370.10">
    <property type="entry name" value="Ctag/Cox11"/>
    <property type="match status" value="1"/>
</dbReference>
<dbReference type="HAMAP" id="MF_00155">
    <property type="entry name" value="CtaG"/>
    <property type="match status" value="1"/>
</dbReference>
<dbReference type="InterPro" id="IPR023471">
    <property type="entry name" value="CtaG/Cox11_dom_sf"/>
</dbReference>
<dbReference type="InterPro" id="IPR007533">
    <property type="entry name" value="Cyt_c_oxidase_assmbl_CtaG"/>
</dbReference>
<dbReference type="NCBIfam" id="NF003465">
    <property type="entry name" value="PRK05089.1"/>
    <property type="match status" value="1"/>
</dbReference>
<dbReference type="PANTHER" id="PTHR21320:SF3">
    <property type="entry name" value="CYTOCHROME C OXIDASE ASSEMBLY PROTEIN COX11, MITOCHONDRIAL-RELATED"/>
    <property type="match status" value="1"/>
</dbReference>
<dbReference type="PANTHER" id="PTHR21320">
    <property type="entry name" value="CYTOCHROME C OXIDASE ASSEMBLY PROTEIN COX11-RELATED"/>
    <property type="match status" value="1"/>
</dbReference>
<dbReference type="Pfam" id="PF04442">
    <property type="entry name" value="CtaG_Cox11"/>
    <property type="match status" value="1"/>
</dbReference>
<dbReference type="PIRSF" id="PIRSF005413">
    <property type="entry name" value="COX11"/>
    <property type="match status" value="1"/>
</dbReference>
<dbReference type="SUPFAM" id="SSF110111">
    <property type="entry name" value="Ctag/Cox11"/>
    <property type="match status" value="1"/>
</dbReference>